<dbReference type="EC" id="6.3.4.22" evidence="1"/>
<dbReference type="EMBL" id="L77117">
    <property type="protein sequence ID" value="AAB99098.1"/>
    <property type="molecule type" value="Genomic_DNA"/>
</dbReference>
<dbReference type="PIR" id="F64436">
    <property type="entry name" value="F64436"/>
</dbReference>
<dbReference type="SMR" id="Q58495"/>
<dbReference type="FunCoup" id="Q58495">
    <property type="interactions" value="2"/>
</dbReference>
<dbReference type="STRING" id="243232.MJ_1095"/>
<dbReference type="PaxDb" id="243232-MJ_1095"/>
<dbReference type="EnsemblBacteria" id="AAB99098">
    <property type="protein sequence ID" value="AAB99098"/>
    <property type="gene ID" value="MJ_1095"/>
</dbReference>
<dbReference type="KEGG" id="mja:MJ_1095"/>
<dbReference type="eggNOG" id="arCOG01115">
    <property type="taxonomic scope" value="Archaea"/>
</dbReference>
<dbReference type="HOGENOM" id="CLU_675459_0_0_2"/>
<dbReference type="InParanoid" id="Q58495"/>
<dbReference type="PhylomeDB" id="Q58495"/>
<dbReference type="Proteomes" id="UP000000805">
    <property type="component" value="Chromosome"/>
</dbReference>
<dbReference type="GO" id="GO:0005737">
    <property type="term" value="C:cytoplasm"/>
    <property type="evidence" value="ECO:0007669"/>
    <property type="project" value="UniProtKB-SubCell"/>
</dbReference>
<dbReference type="GO" id="GO:0005524">
    <property type="term" value="F:ATP binding"/>
    <property type="evidence" value="ECO:0007669"/>
    <property type="project" value="UniProtKB-KW"/>
</dbReference>
<dbReference type="GO" id="GO:0016879">
    <property type="term" value="F:ligase activity, forming carbon-nitrogen bonds"/>
    <property type="evidence" value="ECO:0007669"/>
    <property type="project" value="UniProtKB-UniRule"/>
</dbReference>
<dbReference type="GO" id="GO:0003676">
    <property type="term" value="F:nucleic acid binding"/>
    <property type="evidence" value="ECO:0007669"/>
    <property type="project" value="InterPro"/>
</dbReference>
<dbReference type="GO" id="GO:0002101">
    <property type="term" value="P:tRNA wobble cytosine modification"/>
    <property type="evidence" value="ECO:0007669"/>
    <property type="project" value="UniProtKB-UniRule"/>
</dbReference>
<dbReference type="CDD" id="cd04482">
    <property type="entry name" value="RPA2_OBF_like"/>
    <property type="match status" value="1"/>
</dbReference>
<dbReference type="Gene3D" id="2.40.50.1010">
    <property type="match status" value="1"/>
</dbReference>
<dbReference type="Gene3D" id="3.30.70.2200">
    <property type="match status" value="1"/>
</dbReference>
<dbReference type="Gene3D" id="3.90.600.20">
    <property type="match status" value="1"/>
</dbReference>
<dbReference type="HAMAP" id="MF_01892">
    <property type="entry name" value="tRNA_Ile2_agm2C_synt"/>
    <property type="match status" value="1"/>
</dbReference>
<dbReference type="InterPro" id="IPR012340">
    <property type="entry name" value="NA-bd_OB-fold"/>
</dbReference>
<dbReference type="InterPro" id="IPR004365">
    <property type="entry name" value="NA-bd_OB_tRNA"/>
</dbReference>
<dbReference type="InterPro" id="IPR053870">
    <property type="entry name" value="TiaS-like_TCKD"/>
</dbReference>
<dbReference type="InterPro" id="IPR013696">
    <property type="entry name" value="TiaS_FLD"/>
</dbReference>
<dbReference type="InterPro" id="IPR024913">
    <property type="entry name" value="tRNA_Ile2__agm2C_synt"/>
</dbReference>
<dbReference type="InterPro" id="IPR055394">
    <property type="entry name" value="Zn_ribbon_TiaS"/>
</dbReference>
<dbReference type="PANTHER" id="PTHR40705">
    <property type="entry name" value="TRNA(ILE2) 2-AGMATINYLCYTIDINE SYNTHETASE TIAS"/>
    <property type="match status" value="1"/>
</dbReference>
<dbReference type="PANTHER" id="PTHR40705:SF1">
    <property type="entry name" value="TRNA(ILE2) 2-AGMATINYLCYTIDINE SYNTHETASE TIAS"/>
    <property type="match status" value="1"/>
</dbReference>
<dbReference type="Pfam" id="PF08489">
    <property type="entry name" value="TiaS_FLD"/>
    <property type="match status" value="1"/>
</dbReference>
<dbReference type="Pfam" id="PF22641">
    <property type="entry name" value="TiaS_TCKD"/>
    <property type="match status" value="1"/>
</dbReference>
<dbReference type="Pfam" id="PF01336">
    <property type="entry name" value="tRNA_anti-codon"/>
    <property type="match status" value="1"/>
</dbReference>
<dbReference type="Pfam" id="PF23783">
    <property type="entry name" value="Zn_ribbon_TiaS"/>
    <property type="match status" value="1"/>
</dbReference>
<dbReference type="SUPFAM" id="SSF50249">
    <property type="entry name" value="Nucleic acid-binding proteins"/>
    <property type="match status" value="1"/>
</dbReference>
<keyword id="KW-0067">ATP-binding</keyword>
<keyword id="KW-0963">Cytoplasm</keyword>
<keyword id="KW-0436">Ligase</keyword>
<keyword id="KW-0547">Nucleotide-binding</keyword>
<keyword id="KW-1185">Reference proteome</keyword>
<keyword id="KW-0819">tRNA processing</keyword>
<comment type="function">
    <text evidence="1">ATP-dependent agmatine transferase that catalyzes the formation of 2-agmatinylcytidine (agm2C) at the wobble position (C34) of tRNA(Ile2), converting the codon specificity from AUG to AUA.</text>
</comment>
<comment type="catalytic activity">
    <reaction evidence="1">
        <text>cytidine(34) in tRNA(Ile2) + agmatine + ATP + H2O = 2-agmatinylcytidine(34) in tRNA(Ile2) + AMP + 2 phosphate + 2 H(+)</text>
        <dbReference type="Rhea" id="RHEA:43608"/>
        <dbReference type="Rhea" id="RHEA-COMP:10625"/>
        <dbReference type="Rhea" id="RHEA-COMP:10626"/>
        <dbReference type="ChEBI" id="CHEBI:15377"/>
        <dbReference type="ChEBI" id="CHEBI:15378"/>
        <dbReference type="ChEBI" id="CHEBI:30616"/>
        <dbReference type="ChEBI" id="CHEBI:43474"/>
        <dbReference type="ChEBI" id="CHEBI:58145"/>
        <dbReference type="ChEBI" id="CHEBI:82748"/>
        <dbReference type="ChEBI" id="CHEBI:83545"/>
        <dbReference type="ChEBI" id="CHEBI:456215"/>
        <dbReference type="EC" id="6.3.4.22"/>
    </reaction>
</comment>
<comment type="subcellular location">
    <subcellularLocation>
        <location evidence="1">Cytoplasm</location>
    </subcellularLocation>
</comment>
<comment type="similarity">
    <text evidence="1">Belongs to the TiaS family.</text>
</comment>
<evidence type="ECO:0000255" key="1">
    <source>
        <dbReference type="HAMAP-Rule" id="MF_01892"/>
    </source>
</evidence>
<gene>
    <name evidence="1" type="primary">tiaS</name>
    <name type="ordered locus">MJ1095</name>
</gene>
<name>TIAS_METJA</name>
<sequence>MVMMFIGIDDTDSPNKYCTTYIATLLIEELKGCGYSVDMPKLIRMNPMVKYKTRGNGGVAIHILDELYSKDKEEIKNITISLVEKYTDFECENTNPGIVFLDEAKYKENREKLTNYYKKVLYDIVSVDYAEKFILKVGGEFIKYKLGRGIIGALGAISSTPPYTYELLAYRKKEMWGKKREIDEKSVIEMDKETFPYTFDNYDYENEKILIAPNTPCPVLFGIRGIDAEILLKAMHKIEGEKPERFMIFKTNHGTDVHLRKMNIKDIYPNTGVIVYGRVVEEPRDIEGGHVIFKLSDGTGEIDCMAYEPTKGFRDIIRKLIVGDYIAVYGTVREKPLGINIEKIKILKLEKKFVKDKRCPYCGGTLKAKGKKAGYKCKKCKKTIAYDEIKMIEVERDLKTGFYEVPGSARRHLSKPIQLIDLI</sequence>
<protein>
    <recommendedName>
        <fullName evidence="1">tRNA(Ile2) 2-agmatinylcytidine synthetase TiaS</fullName>
        <shortName evidence="1">tRNA(Ile2)-agm2C synthetase</shortName>
        <ecNumber evidence="1">6.3.4.22</ecNumber>
    </recommendedName>
    <alternativeName>
        <fullName evidence="1">tRNA(Ile2) agmatidine synthetase</fullName>
    </alternativeName>
</protein>
<organism>
    <name type="scientific">Methanocaldococcus jannaschii (strain ATCC 43067 / DSM 2661 / JAL-1 / JCM 10045 / NBRC 100440)</name>
    <name type="common">Methanococcus jannaschii</name>
    <dbReference type="NCBI Taxonomy" id="243232"/>
    <lineage>
        <taxon>Archaea</taxon>
        <taxon>Methanobacteriati</taxon>
        <taxon>Methanobacteriota</taxon>
        <taxon>Methanomada group</taxon>
        <taxon>Methanococci</taxon>
        <taxon>Methanococcales</taxon>
        <taxon>Methanocaldococcaceae</taxon>
        <taxon>Methanocaldococcus</taxon>
    </lineage>
</organism>
<reference key="1">
    <citation type="journal article" date="1996" name="Science">
        <title>Complete genome sequence of the methanogenic archaeon, Methanococcus jannaschii.</title>
        <authorList>
            <person name="Bult C.J."/>
            <person name="White O."/>
            <person name="Olsen G.J."/>
            <person name="Zhou L."/>
            <person name="Fleischmann R.D."/>
            <person name="Sutton G.G."/>
            <person name="Blake J.A."/>
            <person name="FitzGerald L.M."/>
            <person name="Clayton R.A."/>
            <person name="Gocayne J.D."/>
            <person name="Kerlavage A.R."/>
            <person name="Dougherty B.A."/>
            <person name="Tomb J.-F."/>
            <person name="Adams M.D."/>
            <person name="Reich C.I."/>
            <person name="Overbeek R."/>
            <person name="Kirkness E.F."/>
            <person name="Weinstock K.G."/>
            <person name="Merrick J.M."/>
            <person name="Glodek A."/>
            <person name="Scott J.L."/>
            <person name="Geoghagen N.S.M."/>
            <person name="Weidman J.F."/>
            <person name="Fuhrmann J.L."/>
            <person name="Nguyen D."/>
            <person name="Utterback T.R."/>
            <person name="Kelley J.M."/>
            <person name="Peterson J.D."/>
            <person name="Sadow P.W."/>
            <person name="Hanna M.C."/>
            <person name="Cotton M.D."/>
            <person name="Roberts K.M."/>
            <person name="Hurst M.A."/>
            <person name="Kaine B.P."/>
            <person name="Borodovsky M."/>
            <person name="Klenk H.-P."/>
            <person name="Fraser C.M."/>
            <person name="Smith H.O."/>
            <person name="Woese C.R."/>
            <person name="Venter J.C."/>
        </authorList>
    </citation>
    <scope>NUCLEOTIDE SEQUENCE [LARGE SCALE GENOMIC DNA]</scope>
    <source>
        <strain>ATCC 43067 / DSM 2661 / JAL-1 / JCM 10045 / NBRC 100440</strain>
    </source>
</reference>
<accession>Q58495</accession>
<feature type="chain" id="PRO_0000107166" description="tRNA(Ile2) 2-agmatinylcytidine synthetase TiaS">
    <location>
        <begin position="1"/>
        <end position="423"/>
    </location>
</feature>
<feature type="DNA-binding region" description="OB" evidence="1">
    <location>
        <begin position="273"/>
        <end position="347"/>
    </location>
</feature>
<proteinExistence type="inferred from homology"/>